<organism>
    <name type="scientific">Streptomyces lincolnensis</name>
    <dbReference type="NCBI Taxonomy" id="1915"/>
    <lineage>
        <taxon>Bacteria</taxon>
        <taxon>Bacillati</taxon>
        <taxon>Actinomycetota</taxon>
        <taxon>Actinomycetes</taxon>
        <taxon>Kitasatosporales</taxon>
        <taxon>Streptomycetaceae</taxon>
        <taxon>Streptomyces</taxon>
    </lineage>
</organism>
<proteinExistence type="predicted"/>
<reference key="1">
    <citation type="submission" date="1996-02" db="EMBL/GenBank/DDBJ databases">
        <authorList>
            <person name="Zhang H.Z."/>
            <person name="Piepersberg W."/>
        </authorList>
    </citation>
    <scope>NUCLEOTIDE SEQUENCE [GENOMIC DNA]</scope>
    <source>
        <strain>78-11</strain>
    </source>
</reference>
<feature type="chain" id="PRO_0000066305" description="Uncharacterized 17.2 kDa protein in melC2-rnhH intergenic region">
    <location>
        <begin position="1"/>
        <end position="150"/>
    </location>
</feature>
<sequence length="150" mass="17167">MSKVEESIEVGVPVHTAYNQWTQFETFPQFMSGVERIEQRTDTLTHWVTSVNGVHKEFDAEITEQIPDERVAWTTVGGEAEQAGVVTFHRLDDDHTKVMLQMDFHPDSVTEKVGDKLGFVKRQTKGDLERFKKFIEERGQETGGWRGAVI</sequence>
<name>YMEL_STRLN</name>
<accession>P55049</accession>
<protein>
    <recommendedName>
        <fullName>Uncharacterized 17.2 kDa protein in melC2-rnhH intergenic region</fullName>
    </recommendedName>
    <alternativeName>
        <fullName>ORF3</fullName>
    </alternativeName>
</protein>
<dbReference type="EMBL" id="X95703">
    <property type="protein sequence ID" value="CAA65001.1"/>
    <property type="molecule type" value="Genomic_DNA"/>
</dbReference>
<dbReference type="RefSeq" id="WP_067426223.1">
    <property type="nucleotide sequence ID" value="NZ_CP016438.1"/>
</dbReference>
<dbReference type="SMR" id="P55049"/>
<dbReference type="STRING" id="1915.SLINC_0494"/>
<dbReference type="OrthoDB" id="3695445at2"/>
<dbReference type="CDD" id="cd07817">
    <property type="entry name" value="SRPBCC_8"/>
    <property type="match status" value="1"/>
</dbReference>
<dbReference type="Gene3D" id="3.30.530.20">
    <property type="match status" value="1"/>
</dbReference>
<dbReference type="InterPro" id="IPR005031">
    <property type="entry name" value="COQ10_START"/>
</dbReference>
<dbReference type="InterPro" id="IPR047137">
    <property type="entry name" value="ORF3"/>
</dbReference>
<dbReference type="InterPro" id="IPR023393">
    <property type="entry name" value="START-like_dom_sf"/>
</dbReference>
<dbReference type="PANTHER" id="PTHR33824">
    <property type="entry name" value="POLYKETIDE CYCLASE/DEHYDRASE AND LIPID TRANSPORT SUPERFAMILY PROTEIN"/>
    <property type="match status" value="1"/>
</dbReference>
<dbReference type="PANTHER" id="PTHR33824:SF7">
    <property type="entry name" value="POLYKETIDE CYCLASE_DEHYDRASE AND LIPID TRANSPORT SUPERFAMILY PROTEIN"/>
    <property type="match status" value="1"/>
</dbReference>
<dbReference type="Pfam" id="PF03364">
    <property type="entry name" value="Polyketide_cyc"/>
    <property type="match status" value="1"/>
</dbReference>
<dbReference type="SUPFAM" id="SSF55961">
    <property type="entry name" value="Bet v1-like"/>
    <property type="match status" value="1"/>
</dbReference>